<comment type="similarity">
    <text evidence="1">Belongs to the UPF0246 family.</text>
</comment>
<dbReference type="EMBL" id="CP000849">
    <property type="protein sequence ID" value="ABV78876.1"/>
    <property type="molecule type" value="Genomic_DNA"/>
</dbReference>
<dbReference type="RefSeq" id="WP_011477542.1">
    <property type="nucleotide sequence ID" value="NC_009883.1"/>
</dbReference>
<dbReference type="SMR" id="A8GVJ9"/>
<dbReference type="KEGG" id="rbo:A1I_02510"/>
<dbReference type="HOGENOM" id="CLU_061989_0_0_5"/>
<dbReference type="GO" id="GO:0005829">
    <property type="term" value="C:cytosol"/>
    <property type="evidence" value="ECO:0007669"/>
    <property type="project" value="TreeGrafter"/>
</dbReference>
<dbReference type="GO" id="GO:0033194">
    <property type="term" value="P:response to hydroperoxide"/>
    <property type="evidence" value="ECO:0007669"/>
    <property type="project" value="TreeGrafter"/>
</dbReference>
<dbReference type="HAMAP" id="MF_00652">
    <property type="entry name" value="UPF0246"/>
    <property type="match status" value="1"/>
</dbReference>
<dbReference type="InterPro" id="IPR005583">
    <property type="entry name" value="YaaA"/>
</dbReference>
<dbReference type="PANTHER" id="PTHR30283:SF4">
    <property type="entry name" value="PEROXIDE STRESS RESISTANCE PROTEIN YAAA"/>
    <property type="match status" value="1"/>
</dbReference>
<dbReference type="PANTHER" id="PTHR30283">
    <property type="entry name" value="PEROXIDE STRESS RESPONSE PROTEIN YAAA"/>
    <property type="match status" value="1"/>
</dbReference>
<dbReference type="Pfam" id="PF03883">
    <property type="entry name" value="H2O2_YaaD"/>
    <property type="match status" value="1"/>
</dbReference>
<gene>
    <name type="ordered locus">A1I_02510</name>
</gene>
<feature type="chain" id="PRO_1000061630" description="UPF0246 protein A1I_02510">
    <location>
        <begin position="1"/>
        <end position="248"/>
    </location>
</feature>
<evidence type="ECO:0000255" key="1">
    <source>
        <dbReference type="HAMAP-Rule" id="MF_00652"/>
    </source>
</evidence>
<name>Y2510_RICB8</name>
<reference key="1">
    <citation type="submission" date="2007-09" db="EMBL/GenBank/DDBJ databases">
        <title>Complete genome sequencing of Rickettsia bellii.</title>
        <authorList>
            <person name="Madan A."/>
            <person name="Lee H."/>
            <person name="Madan A."/>
            <person name="Yoon J.-G."/>
            <person name="Ryu G.-Y."/>
            <person name="Dasch G."/>
            <person name="Ereemeva M."/>
        </authorList>
    </citation>
    <scope>NUCLEOTIDE SEQUENCE [LARGE SCALE GENOMIC DNA]</scope>
    <source>
        <strain>OSU 85-389</strain>
    </source>
</reference>
<accession>A8GVJ9</accession>
<organism>
    <name type="scientific">Rickettsia bellii (strain OSU 85-389)</name>
    <dbReference type="NCBI Taxonomy" id="391896"/>
    <lineage>
        <taxon>Bacteria</taxon>
        <taxon>Pseudomonadati</taxon>
        <taxon>Pseudomonadota</taxon>
        <taxon>Alphaproteobacteria</taxon>
        <taxon>Rickettsiales</taxon>
        <taxon>Rickettsiaceae</taxon>
        <taxon>Rickettsieae</taxon>
        <taxon>Rickettsia</taxon>
        <taxon>belli group</taxon>
    </lineage>
</organism>
<proteinExistence type="inferred from homology"/>
<protein>
    <recommendedName>
        <fullName evidence="1">UPF0246 protein A1I_02510</fullName>
    </recommendedName>
</protein>
<sequence length="248" mass="28279">MLTIISSAKTLNFELIAFKGELTSPAFPKITNQLLAIVKNYSEVQLSKTMDISEKLAHLNKERFQNFEKQDSKAAIFAYAGDVFNNIQSKNLSEDAVNFLQSHLLIISGLYGALKPLDAIKPYRLEMAAKLNEINDLSKFWQDEITNYINHTLEHHKHKYLLNLASQEYSSVLNQDKLKYPIINIHFKENRNGKLATIGINAKKARGNMVNFIANNLIDSPDLLKEFSYLGYKYSSKDSLNNDLVFVK</sequence>